<reference key="1">
    <citation type="journal article" date="2004" name="Nat. Biotechnol.">
        <title>The genome sequence of the anaerobic, sulfate-reducing bacterium Desulfovibrio vulgaris Hildenborough.</title>
        <authorList>
            <person name="Heidelberg J.F."/>
            <person name="Seshadri R."/>
            <person name="Haveman S.A."/>
            <person name="Hemme C.L."/>
            <person name="Paulsen I.T."/>
            <person name="Kolonay J.F."/>
            <person name="Eisen J.A."/>
            <person name="Ward N.L."/>
            <person name="Methe B.A."/>
            <person name="Brinkac L.M."/>
            <person name="Daugherty S.C."/>
            <person name="DeBoy R.T."/>
            <person name="Dodson R.J."/>
            <person name="Durkin A.S."/>
            <person name="Madupu R."/>
            <person name="Nelson W.C."/>
            <person name="Sullivan S.A."/>
            <person name="Fouts D.E."/>
            <person name="Haft D.H."/>
            <person name="Selengut J."/>
            <person name="Peterson J.D."/>
            <person name="Davidsen T.M."/>
            <person name="Zafar N."/>
            <person name="Zhou L."/>
            <person name="Radune D."/>
            <person name="Dimitrov G."/>
            <person name="Hance M."/>
            <person name="Tran K."/>
            <person name="Khouri H.M."/>
            <person name="Gill J."/>
            <person name="Utterback T.R."/>
            <person name="Feldblyum T.V."/>
            <person name="Wall J.D."/>
            <person name="Voordouw G."/>
            <person name="Fraser C.M."/>
        </authorList>
    </citation>
    <scope>NUCLEOTIDE SEQUENCE [LARGE SCALE GENOMIC DNA]</scope>
    <source>
        <strain>ATCC 29579 / DSM 644 / CCUG 34227 / NCIMB 8303 / VKM B-1760 / Hildenborough</strain>
    </source>
</reference>
<proteinExistence type="inferred from homology"/>
<gene>
    <name evidence="1" type="primary">argJ</name>
    <name type="ordered locus">DVU_0823</name>
</gene>
<comment type="function">
    <text evidence="1">Catalyzes two activities which are involved in the cyclic version of arginine biosynthesis: the synthesis of N-acetylglutamate from glutamate and acetyl-CoA as the acetyl donor, and of ornithine by transacetylation between N(2)-acetylornithine and glutamate.</text>
</comment>
<comment type="catalytic activity">
    <reaction evidence="1">
        <text>N(2)-acetyl-L-ornithine + L-glutamate = N-acetyl-L-glutamate + L-ornithine</text>
        <dbReference type="Rhea" id="RHEA:15349"/>
        <dbReference type="ChEBI" id="CHEBI:29985"/>
        <dbReference type="ChEBI" id="CHEBI:44337"/>
        <dbReference type="ChEBI" id="CHEBI:46911"/>
        <dbReference type="ChEBI" id="CHEBI:57805"/>
        <dbReference type="EC" id="2.3.1.35"/>
    </reaction>
</comment>
<comment type="catalytic activity">
    <reaction evidence="1">
        <text>L-glutamate + acetyl-CoA = N-acetyl-L-glutamate + CoA + H(+)</text>
        <dbReference type="Rhea" id="RHEA:24292"/>
        <dbReference type="ChEBI" id="CHEBI:15378"/>
        <dbReference type="ChEBI" id="CHEBI:29985"/>
        <dbReference type="ChEBI" id="CHEBI:44337"/>
        <dbReference type="ChEBI" id="CHEBI:57287"/>
        <dbReference type="ChEBI" id="CHEBI:57288"/>
        <dbReference type="EC" id="2.3.1.1"/>
    </reaction>
</comment>
<comment type="pathway">
    <text evidence="1">Amino-acid biosynthesis; L-arginine biosynthesis; L-ornithine and N-acetyl-L-glutamate from L-glutamate and N(2)-acetyl-L-ornithine (cyclic): step 1/1.</text>
</comment>
<comment type="pathway">
    <text evidence="1">Amino-acid biosynthesis; L-arginine biosynthesis; N(2)-acetyl-L-ornithine from L-glutamate: step 1/4.</text>
</comment>
<comment type="subunit">
    <text evidence="1">Heterotetramer of two alpha and two beta chains.</text>
</comment>
<comment type="subcellular location">
    <subcellularLocation>
        <location evidence="1">Cytoplasm</location>
    </subcellularLocation>
</comment>
<comment type="similarity">
    <text evidence="1">Belongs to the ArgJ family.</text>
</comment>
<evidence type="ECO:0000255" key="1">
    <source>
        <dbReference type="HAMAP-Rule" id="MF_01106"/>
    </source>
</evidence>
<keyword id="KW-0012">Acyltransferase</keyword>
<keyword id="KW-0028">Amino-acid biosynthesis</keyword>
<keyword id="KW-0055">Arginine biosynthesis</keyword>
<keyword id="KW-0068">Autocatalytic cleavage</keyword>
<keyword id="KW-0963">Cytoplasm</keyword>
<keyword id="KW-0511">Multifunctional enzyme</keyword>
<keyword id="KW-1185">Reference proteome</keyword>
<keyword id="KW-0808">Transferase</keyword>
<dbReference type="EC" id="2.3.1.35" evidence="1"/>
<dbReference type="EC" id="2.3.1.1" evidence="1"/>
<dbReference type="EMBL" id="AE017285">
    <property type="protein sequence ID" value="AAS95303.1"/>
    <property type="molecule type" value="Genomic_DNA"/>
</dbReference>
<dbReference type="RefSeq" id="WP_010938124.1">
    <property type="nucleotide sequence ID" value="NC_002937.3"/>
</dbReference>
<dbReference type="RefSeq" id="YP_010044.1">
    <property type="nucleotide sequence ID" value="NC_002937.3"/>
</dbReference>
<dbReference type="SMR" id="P62060"/>
<dbReference type="IntAct" id="P62060">
    <property type="interactions" value="1"/>
</dbReference>
<dbReference type="STRING" id="882.DVU_0823"/>
<dbReference type="PaxDb" id="882-DVU_0823"/>
<dbReference type="EnsemblBacteria" id="AAS95303">
    <property type="protein sequence ID" value="AAS95303"/>
    <property type="gene ID" value="DVU_0823"/>
</dbReference>
<dbReference type="KEGG" id="dvu:DVU_0823"/>
<dbReference type="PATRIC" id="fig|882.5.peg.770"/>
<dbReference type="eggNOG" id="COG1364">
    <property type="taxonomic scope" value="Bacteria"/>
</dbReference>
<dbReference type="HOGENOM" id="CLU_027172_1_0_7"/>
<dbReference type="OrthoDB" id="9804242at2"/>
<dbReference type="PhylomeDB" id="P62060"/>
<dbReference type="UniPathway" id="UPA00068">
    <property type="reaction ID" value="UER00106"/>
</dbReference>
<dbReference type="UniPathway" id="UPA00068">
    <property type="reaction ID" value="UER00111"/>
</dbReference>
<dbReference type="Proteomes" id="UP000002194">
    <property type="component" value="Chromosome"/>
</dbReference>
<dbReference type="GO" id="GO:0005737">
    <property type="term" value="C:cytoplasm"/>
    <property type="evidence" value="ECO:0007669"/>
    <property type="project" value="UniProtKB-SubCell"/>
</dbReference>
<dbReference type="GO" id="GO:0004358">
    <property type="term" value="F:glutamate N-acetyltransferase activity"/>
    <property type="evidence" value="ECO:0007669"/>
    <property type="project" value="UniProtKB-UniRule"/>
</dbReference>
<dbReference type="GO" id="GO:0004042">
    <property type="term" value="F:L-glutamate N-acetyltransferase activity"/>
    <property type="evidence" value="ECO:0007669"/>
    <property type="project" value="UniProtKB-UniRule"/>
</dbReference>
<dbReference type="GO" id="GO:0006526">
    <property type="term" value="P:L-arginine biosynthetic process"/>
    <property type="evidence" value="ECO:0007669"/>
    <property type="project" value="UniProtKB-UniRule"/>
</dbReference>
<dbReference type="GO" id="GO:0006592">
    <property type="term" value="P:ornithine biosynthetic process"/>
    <property type="evidence" value="ECO:0007669"/>
    <property type="project" value="TreeGrafter"/>
</dbReference>
<dbReference type="CDD" id="cd02152">
    <property type="entry name" value="OAT"/>
    <property type="match status" value="1"/>
</dbReference>
<dbReference type="FunFam" id="3.60.70.12:FF:000001">
    <property type="entry name" value="Arginine biosynthesis bifunctional protein ArgJ, chloroplastic"/>
    <property type="match status" value="1"/>
</dbReference>
<dbReference type="Gene3D" id="3.10.20.340">
    <property type="entry name" value="ArgJ beta chain, C-terminal domain"/>
    <property type="match status" value="1"/>
</dbReference>
<dbReference type="Gene3D" id="3.60.70.12">
    <property type="entry name" value="L-amino peptidase D-ALA esterase/amidase"/>
    <property type="match status" value="1"/>
</dbReference>
<dbReference type="HAMAP" id="MF_01106">
    <property type="entry name" value="ArgJ"/>
    <property type="match status" value="1"/>
</dbReference>
<dbReference type="InterPro" id="IPR002813">
    <property type="entry name" value="Arg_biosynth_ArgJ"/>
</dbReference>
<dbReference type="InterPro" id="IPR016117">
    <property type="entry name" value="ArgJ-like_dom_sf"/>
</dbReference>
<dbReference type="InterPro" id="IPR042195">
    <property type="entry name" value="ArgJ_beta_C"/>
</dbReference>
<dbReference type="NCBIfam" id="TIGR00120">
    <property type="entry name" value="ArgJ"/>
    <property type="match status" value="1"/>
</dbReference>
<dbReference type="NCBIfam" id="NF003802">
    <property type="entry name" value="PRK05388.1"/>
    <property type="match status" value="1"/>
</dbReference>
<dbReference type="PANTHER" id="PTHR23100">
    <property type="entry name" value="ARGININE BIOSYNTHESIS BIFUNCTIONAL PROTEIN ARGJ"/>
    <property type="match status" value="1"/>
</dbReference>
<dbReference type="PANTHER" id="PTHR23100:SF0">
    <property type="entry name" value="ARGININE BIOSYNTHESIS BIFUNCTIONAL PROTEIN ARGJ, MITOCHONDRIAL"/>
    <property type="match status" value="1"/>
</dbReference>
<dbReference type="Pfam" id="PF01960">
    <property type="entry name" value="ArgJ"/>
    <property type="match status" value="1"/>
</dbReference>
<dbReference type="SUPFAM" id="SSF56266">
    <property type="entry name" value="DmpA/ArgJ-like"/>
    <property type="match status" value="1"/>
</dbReference>
<feature type="chain" id="PRO_0000002167" description="Arginine biosynthesis bifunctional protein ArgJ alpha chain" evidence="1">
    <location>
        <begin position="1"/>
        <end position="181"/>
    </location>
</feature>
<feature type="chain" id="PRO_0000002168" description="Arginine biosynthesis bifunctional protein ArgJ beta chain" evidence="1">
    <location>
        <begin position="182"/>
        <end position="393"/>
    </location>
</feature>
<feature type="active site" description="Nucleophile" evidence="1">
    <location>
        <position position="182"/>
    </location>
</feature>
<feature type="binding site" evidence="1">
    <location>
        <position position="145"/>
    </location>
    <ligand>
        <name>substrate</name>
    </ligand>
</feature>
<feature type="binding site" evidence="1">
    <location>
        <position position="171"/>
    </location>
    <ligand>
        <name>substrate</name>
    </ligand>
</feature>
<feature type="binding site" evidence="1">
    <location>
        <position position="182"/>
    </location>
    <ligand>
        <name>substrate</name>
    </ligand>
</feature>
<feature type="binding site" evidence="1">
    <location>
        <position position="265"/>
    </location>
    <ligand>
        <name>substrate</name>
    </ligand>
</feature>
<feature type="binding site" evidence="1">
    <location>
        <position position="388"/>
    </location>
    <ligand>
        <name>substrate</name>
    </ligand>
</feature>
<feature type="binding site" evidence="1">
    <location>
        <position position="393"/>
    </location>
    <ligand>
        <name>substrate</name>
    </ligand>
</feature>
<feature type="site" description="Involved in the stabilization of negative charge on the oxyanion by the formation of the oxyanion hole" evidence="1">
    <location>
        <position position="108"/>
    </location>
</feature>
<feature type="site" description="Involved in the stabilization of negative charge on the oxyanion by the formation of the oxyanion hole" evidence="1">
    <location>
        <position position="109"/>
    </location>
</feature>
<feature type="site" description="Cleavage; by autolysis" evidence="1">
    <location>
        <begin position="181"/>
        <end position="182"/>
    </location>
</feature>
<organism>
    <name type="scientific">Nitratidesulfovibrio vulgaris (strain ATCC 29579 / DSM 644 / CCUG 34227 / NCIMB 8303 / VKM B-1760 / Hildenborough)</name>
    <name type="common">Desulfovibrio vulgaris</name>
    <dbReference type="NCBI Taxonomy" id="882"/>
    <lineage>
        <taxon>Bacteria</taxon>
        <taxon>Pseudomonadati</taxon>
        <taxon>Thermodesulfobacteriota</taxon>
        <taxon>Desulfovibrionia</taxon>
        <taxon>Desulfovibrionales</taxon>
        <taxon>Desulfovibrionaceae</taxon>
        <taxon>Nitratidesulfovibrio</taxon>
    </lineage>
</organism>
<accession>P62060</accession>
<protein>
    <recommendedName>
        <fullName evidence="1">Arginine biosynthesis bifunctional protein ArgJ</fullName>
    </recommendedName>
    <domain>
        <recommendedName>
            <fullName evidence="1">Glutamate N-acetyltransferase</fullName>
            <ecNumber evidence="1">2.3.1.35</ecNumber>
        </recommendedName>
        <alternativeName>
            <fullName evidence="1">Ornithine acetyltransferase</fullName>
            <shortName evidence="1">OATase</shortName>
        </alternativeName>
        <alternativeName>
            <fullName evidence="1">Ornithine transacetylase</fullName>
        </alternativeName>
    </domain>
    <domain>
        <recommendedName>
            <fullName evidence="1">Amino-acid acetyltransferase</fullName>
            <ecNumber evidence="1">2.3.1.1</ecNumber>
        </recommendedName>
        <alternativeName>
            <fullName evidence="1">N-acetylglutamate synthase</fullName>
            <shortName evidence="1">AGSase</shortName>
        </alternativeName>
    </domain>
    <component>
        <recommendedName>
            <fullName evidence="1">Arginine biosynthesis bifunctional protein ArgJ alpha chain</fullName>
        </recommendedName>
    </component>
    <component>
        <recommendedName>
            <fullName evidence="1">Arginine biosynthesis bifunctional protein ArgJ beta chain</fullName>
        </recommendedName>
    </component>
</protein>
<name>ARGJ_NITV2</name>
<sequence>MSASPKGFRFATVSAGFRKEARPDLALIVSDTPATAAGVFTTNRFQAAPVVVARENLSARPVARAVVINSGQANACTGDEGMTNCRTTLDLVGKACGIPAAEVLPASTGVIGAQLHMDKWREAAPRLAAALGQNTHHDFARAIMTTDAFPKVAERELAIAGTTVRLVGMAKGAGMICPNMATMLSVVLCDAAVTPEAWQRLFLDAVDRTFNRVTVDGDTSTNDTVFGLANGASGVTVEGEDLAKLGEALTDVLARLAYMLVQDGEGATKVMRVKVSGAVDDAEAEAVARTVGHSQLVKTAMYGRDANWGRIVAAVGRSGASFKAEDVVVTLCGVELFRNGQPTDLDFDTLLREPLKGRDVTVDIELGAGTGHYELLASDLTHDYVNCNADYRS</sequence>